<gene>
    <name type="primary">Lrrcc1</name>
    <name type="synonym">Kiaa1764</name>
</gene>
<accession>Q69ZB0</accession>
<accession>B2RS58</accession>
<accession>Q4FZD6</accession>
<accession>Q6P8L1</accession>
<accession>Q9CUE1</accession>
<accession>Q9DC06</accession>
<name>LRCC1_MOUSE</name>
<comment type="function">
    <text evidence="1">Required for the organization of the mitotic spindle. Maintains the structural integrity of centrosomes during mitosis (By similarity).</text>
</comment>
<comment type="subcellular location">
    <subcellularLocation>
        <location>Cytoplasm</location>
        <location>Cytoskeleton</location>
        <location>Microtubule organizing center</location>
        <location>Centrosome</location>
        <location>Centriole</location>
    </subcellularLocation>
    <text evidence="1">Associates with the centrosome throughout the cell cycle and extensively accumulates during the mitotic phase.</text>
</comment>
<comment type="alternative products">
    <event type="alternative splicing"/>
    <isoform>
        <id>Q69ZB0-1</id>
        <name>1</name>
        <sequence type="displayed"/>
    </isoform>
    <isoform>
        <id>Q69ZB0-2</id>
        <name>2</name>
        <sequence type="described" ref="VSP_033869"/>
    </isoform>
    <isoform>
        <id>Q69ZB0-3</id>
        <name>3</name>
        <sequence type="described" ref="VSP_033870 VSP_033871"/>
    </isoform>
</comment>
<comment type="similarity">
    <text evidence="6">Belongs to the LRRCC1 family.</text>
</comment>
<comment type="sequence caution" evidence="6">
    <conflict type="miscellaneous discrepancy">
        <sequence resource="EMBL-CDS" id="AAH61202"/>
    </conflict>
    <text>Contaminating sequence. Potential poly-A sequence.</text>
</comment>
<comment type="sequence caution" evidence="6">
    <conflict type="frameshift">
        <sequence resource="EMBL-CDS" id="AAH99680"/>
    </conflict>
</comment>
<comment type="sequence caution" evidence="6">
    <conflict type="miscellaneous discrepancy">
        <sequence resource="EMBL-CDS" id="AAH99680"/>
    </conflict>
    <text>Contaminating sequence. Potential poly-A sequence.</text>
</comment>
<comment type="sequence caution" evidence="6">
    <conflict type="frameshift">
        <sequence resource="EMBL-CDS" id="BAB30303"/>
    </conflict>
</comment>
<comment type="sequence caution" evidence="6">
    <conflict type="erroneous initiation">
        <sequence resource="EMBL-CDS" id="BAD32534"/>
    </conflict>
</comment>
<protein>
    <recommendedName>
        <fullName>Leucine-rich repeat and coiled-coil domain-containing protein 1</fullName>
    </recommendedName>
</protein>
<organism>
    <name type="scientific">Mus musculus</name>
    <name type="common">Mouse</name>
    <dbReference type="NCBI Taxonomy" id="10090"/>
    <lineage>
        <taxon>Eukaryota</taxon>
        <taxon>Metazoa</taxon>
        <taxon>Chordata</taxon>
        <taxon>Craniata</taxon>
        <taxon>Vertebrata</taxon>
        <taxon>Euteleostomi</taxon>
        <taxon>Mammalia</taxon>
        <taxon>Eutheria</taxon>
        <taxon>Euarchontoglires</taxon>
        <taxon>Glires</taxon>
        <taxon>Rodentia</taxon>
        <taxon>Myomorpha</taxon>
        <taxon>Muroidea</taxon>
        <taxon>Muridae</taxon>
        <taxon>Murinae</taxon>
        <taxon>Mus</taxon>
        <taxon>Mus</taxon>
    </lineage>
</organism>
<dbReference type="EMBL" id="AK173256">
    <property type="protein sequence ID" value="BAD32534.1"/>
    <property type="status" value="ALT_INIT"/>
    <property type="molecule type" value="mRNA"/>
</dbReference>
<dbReference type="EMBL" id="AK004646">
    <property type="protein sequence ID" value="BAB23437.1"/>
    <property type="molecule type" value="mRNA"/>
</dbReference>
<dbReference type="EMBL" id="AK016559">
    <property type="protein sequence ID" value="BAB30303.1"/>
    <property type="status" value="ALT_FRAME"/>
    <property type="molecule type" value="mRNA"/>
</dbReference>
<dbReference type="EMBL" id="CH466577">
    <property type="protein sequence ID" value="EDL05143.1"/>
    <property type="molecule type" value="Genomic_DNA"/>
</dbReference>
<dbReference type="EMBL" id="BC061202">
    <property type="protein sequence ID" value="AAH61202.1"/>
    <property type="status" value="ALT_SEQ"/>
    <property type="molecule type" value="mRNA"/>
</dbReference>
<dbReference type="EMBL" id="BC099680">
    <property type="protein sequence ID" value="AAH99680.1"/>
    <property type="status" value="ALT_SEQ"/>
    <property type="molecule type" value="mRNA"/>
</dbReference>
<dbReference type="EMBL" id="BC138734">
    <property type="protein sequence ID" value="AAI38735.1"/>
    <property type="molecule type" value="mRNA"/>
</dbReference>
<dbReference type="CCDS" id="CCDS38390.1">
    <molecule id="Q69ZB0-3"/>
</dbReference>
<dbReference type="CCDS" id="CCDS50865.1">
    <molecule id="Q69ZB0-2"/>
</dbReference>
<dbReference type="CCDS" id="CCDS50866.1">
    <molecule id="Q69ZB0-1"/>
</dbReference>
<dbReference type="RefSeq" id="NP_001157051.1">
    <property type="nucleotide sequence ID" value="NM_001163579.1"/>
</dbReference>
<dbReference type="RefSeq" id="NP_001157052.1">
    <property type="nucleotide sequence ID" value="NM_001163580.1"/>
</dbReference>
<dbReference type="RefSeq" id="NP_083191.2">
    <property type="nucleotide sequence ID" value="NM_028915.3"/>
</dbReference>
<dbReference type="SMR" id="Q69ZB0"/>
<dbReference type="BioGRID" id="214872">
    <property type="interactions" value="33"/>
</dbReference>
<dbReference type="FunCoup" id="Q69ZB0">
    <property type="interactions" value="444"/>
</dbReference>
<dbReference type="IntAct" id="Q69ZB0">
    <property type="interactions" value="29"/>
</dbReference>
<dbReference type="STRING" id="10090.ENSMUSP00000126560"/>
<dbReference type="iPTMnet" id="Q69ZB0"/>
<dbReference type="PhosphoSitePlus" id="Q69ZB0"/>
<dbReference type="PaxDb" id="10090-ENSMUSP00000126560"/>
<dbReference type="ProteomicsDB" id="290161">
    <molecule id="Q69ZB0-1"/>
</dbReference>
<dbReference type="ProteomicsDB" id="290162">
    <molecule id="Q69ZB0-2"/>
</dbReference>
<dbReference type="ProteomicsDB" id="290163">
    <molecule id="Q69ZB0-3"/>
</dbReference>
<dbReference type="Pumba" id="Q69ZB0"/>
<dbReference type="DNASU" id="71710"/>
<dbReference type="GeneID" id="71710"/>
<dbReference type="KEGG" id="mmu:71710"/>
<dbReference type="AGR" id="MGI:1918960"/>
<dbReference type="CTD" id="85444"/>
<dbReference type="MGI" id="MGI:1918960">
    <property type="gene designation" value="Lrrcc1"/>
</dbReference>
<dbReference type="eggNOG" id="KOG0531">
    <property type="taxonomic scope" value="Eukaryota"/>
</dbReference>
<dbReference type="InParanoid" id="Q69ZB0"/>
<dbReference type="OrthoDB" id="7451790at2759"/>
<dbReference type="PhylomeDB" id="Q69ZB0"/>
<dbReference type="BioGRID-ORCS" id="71710">
    <property type="hits" value="5 hits in 79 CRISPR screens"/>
</dbReference>
<dbReference type="ChiTaRS" id="Lrrcc1">
    <property type="organism name" value="mouse"/>
</dbReference>
<dbReference type="PRO" id="PR:Q69ZB0"/>
<dbReference type="Proteomes" id="UP000000589">
    <property type="component" value="Unplaced"/>
</dbReference>
<dbReference type="RNAct" id="Q69ZB0">
    <property type="molecule type" value="protein"/>
</dbReference>
<dbReference type="GO" id="GO:0005814">
    <property type="term" value="C:centriole"/>
    <property type="evidence" value="ECO:0007669"/>
    <property type="project" value="UniProtKB-SubCell"/>
</dbReference>
<dbReference type="GO" id="GO:0005737">
    <property type="term" value="C:cytoplasm"/>
    <property type="evidence" value="ECO:0007669"/>
    <property type="project" value="UniProtKB-KW"/>
</dbReference>
<dbReference type="GO" id="GO:0051301">
    <property type="term" value="P:cell division"/>
    <property type="evidence" value="ECO:0007669"/>
    <property type="project" value="UniProtKB-KW"/>
</dbReference>
<dbReference type="FunFam" id="3.80.10.10:FF:000148">
    <property type="entry name" value="Leucine rich repeat and coiled-coil centrosomal protein 1"/>
    <property type="match status" value="1"/>
</dbReference>
<dbReference type="FunFam" id="3.80.10.10:FF:000171">
    <property type="entry name" value="Leucine rich repeat and coiled-coil centrosomal protein 1"/>
    <property type="match status" value="1"/>
</dbReference>
<dbReference type="Gene3D" id="3.80.10.10">
    <property type="entry name" value="Ribonuclease Inhibitor"/>
    <property type="match status" value="2"/>
</dbReference>
<dbReference type="InterPro" id="IPR001611">
    <property type="entry name" value="Leu-rich_rpt"/>
</dbReference>
<dbReference type="InterPro" id="IPR032675">
    <property type="entry name" value="LRR_dom_sf"/>
</dbReference>
<dbReference type="PANTHER" id="PTHR15454:SF34">
    <property type="entry name" value="LEUCINE-RICH REPEAT AND COILED-COIL DOMAIN-CONTAINING PROTEIN 1"/>
    <property type="match status" value="1"/>
</dbReference>
<dbReference type="PANTHER" id="PTHR15454">
    <property type="entry name" value="NISCHARIN RELATED"/>
    <property type="match status" value="1"/>
</dbReference>
<dbReference type="Pfam" id="PF14580">
    <property type="entry name" value="LRR_9"/>
    <property type="match status" value="1"/>
</dbReference>
<dbReference type="SMART" id="SM00365">
    <property type="entry name" value="LRR_SD22"/>
    <property type="match status" value="3"/>
</dbReference>
<dbReference type="SUPFAM" id="SSF52058">
    <property type="entry name" value="L domain-like"/>
    <property type="match status" value="1"/>
</dbReference>
<dbReference type="PROSITE" id="PS51450">
    <property type="entry name" value="LRR"/>
    <property type="match status" value="5"/>
</dbReference>
<sequence>MEAAVCSEIEREDGDSSCGDVCFMDKGLHSISELSLDSSIHAINLHCNNISKISSIDHIWNLRHLDLSSNQISQIEGLNTLTKLCTLNLSCNLITRVEGLEALVNLTKLNLSYNHINDLSGLMPLHGLKYKLRYIDLHSNYIDSIHHLLQCTVGLHFLTNLILEKDGEGNPICLIPGYRAIILQTLPQLRILDCKNIFGEPVSLEEINSSHLQCLEGLLDNLVSSDSPLNISEDEVNDDVPAPPMDVLPSLKEFKSTPEDNVLASLLSVCPSSEPEKINQENDFQNEVKLQKLDDQILQLLNETNNSLIDNVPEKDLRPKRDTDITSESDYGNRRECSRKVPRRTKIPYYARTIQTIKHHNKNNGAFVSCNRKMRQPYLRDLYVRSSLVNCNNLRDLDEQKTGVIKVDKNFSDNSTYRSLVEQLDQEREMRWKAEQTEKKLMDYIDELHKQADEKKDVHSQALITTDRLKDAIFKERHCKAQLEIIVHRLQNEVKKLTIELMKARDQQEDHIRHLRTLERALEKMEKQKAQQQAAQIRLIQEVELKASAADREINLLRTSLHQEKQQVQQLHELLALKEQEHRQEIETRQFFTDAEFQDALTKRLCKEERKHEQEVKEYQEKIDILNQQYLDLENEFRIALTVEARRFKDVQDGFEDVATELAKSKHALIWAQRKENESSSLIKDLTCMVKEQKTKLSEVCKLKQEAAANLQNQINTLEILIEDDKQKSIQIELLKHEKTQLISELAAKESLIYGLRTERKVWGQELACQSSTLSQSRGKLEAQIESLCRENESLRKSHESDCDALRIKCKIIEDQNETIRKLKDSLQEKDGQIKLLQEQIALIEKCSQEQLNEKSSQLDSIVEKLERHNERKEKLKQQLKAKELELEEIRKAYSTLNKKWHDKGELLSHLEMQVKEVKEKFEDKERKLKAERDKSLELQKDAMEKLQNMDDAFRRQVDEIVEAHQAEIMQLANEKQKYIDCANLKVQQVEDEMRGLLDETCKNKKMMEEKIKQLACAISEIQKEM</sequence>
<proteinExistence type="evidence at transcript level"/>
<evidence type="ECO:0000250" key="1"/>
<evidence type="ECO:0000255" key="2"/>
<evidence type="ECO:0000256" key="3">
    <source>
        <dbReference type="SAM" id="MobiDB-lite"/>
    </source>
</evidence>
<evidence type="ECO:0000303" key="4">
    <source>
    </source>
</evidence>
<evidence type="ECO:0000303" key="5">
    <source>
    </source>
</evidence>
<evidence type="ECO:0000305" key="6"/>
<keyword id="KW-0025">Alternative splicing</keyword>
<keyword id="KW-0131">Cell cycle</keyword>
<keyword id="KW-0132">Cell division</keyword>
<keyword id="KW-0175">Coiled coil</keyword>
<keyword id="KW-0963">Cytoplasm</keyword>
<keyword id="KW-0206">Cytoskeleton</keyword>
<keyword id="KW-0433">Leucine-rich repeat</keyword>
<keyword id="KW-0498">Mitosis</keyword>
<keyword id="KW-1185">Reference proteome</keyword>
<keyword id="KW-0677">Repeat</keyword>
<feature type="chain" id="PRO_0000337082" description="Leucine-rich repeat and coiled-coil domain-containing protein 1">
    <location>
        <begin position="1"/>
        <end position="1026"/>
    </location>
</feature>
<feature type="repeat" description="LRR 1">
    <location>
        <begin position="39"/>
        <end position="60"/>
    </location>
</feature>
<feature type="repeat" description="LRR 2">
    <location>
        <begin position="61"/>
        <end position="82"/>
    </location>
</feature>
<feature type="repeat" description="LRR 3">
    <location>
        <begin position="83"/>
        <end position="104"/>
    </location>
</feature>
<feature type="repeat" description="LRR 4">
    <location>
        <begin position="105"/>
        <end position="126"/>
    </location>
</feature>
<feature type="repeat" description="LRR 5">
    <location>
        <begin position="131"/>
        <end position="152"/>
    </location>
</feature>
<feature type="domain" description="LRRCT">
    <location>
        <begin position="170"/>
        <end position="212"/>
    </location>
</feature>
<feature type="region of interest" description="Disordered" evidence="3">
    <location>
        <begin position="310"/>
        <end position="338"/>
    </location>
</feature>
<feature type="coiled-coil region" evidence="2">
    <location>
        <begin position="428"/>
        <end position="641"/>
    </location>
</feature>
<feature type="compositionally biased region" description="Basic and acidic residues" evidence="3">
    <location>
        <begin position="312"/>
        <end position="324"/>
    </location>
</feature>
<feature type="splice variant" id="VSP_033869" description="In isoform 2." evidence="4">
    <location>
        <begin position="286"/>
        <end position="301"/>
    </location>
</feature>
<feature type="splice variant" id="VSP_033870" description="In isoform 3." evidence="4 5">
    <original>VQQVEDE</original>
    <variation>GDYARGD</variation>
    <location>
        <begin position="987"/>
        <end position="993"/>
    </location>
</feature>
<feature type="splice variant" id="VSP_033871" description="In isoform 3." evidence="4 5">
    <location>
        <begin position="994"/>
        <end position="1026"/>
    </location>
</feature>
<feature type="sequence conflict" description="In Ref. 2; BAB30303." evidence="6" ref="2">
    <original>L</original>
    <variation>P</variation>
    <location>
        <position position="28"/>
    </location>
</feature>
<feature type="sequence conflict" description="In Ref. 2; BAB23437/BAB30303, 3; EDL05143 and 4; AAH61202/AAH99680/AAI38735." evidence="6" ref="2 3 4">
    <original>P</original>
    <variation>S</variation>
    <location>
        <position position="241"/>
    </location>
</feature>
<feature type="sequence conflict" description="In Ref. 2; BAB30303." evidence="6" ref="2">
    <original>Q</original>
    <variation>K</variation>
    <location>
        <position position="280"/>
    </location>
</feature>
<feature type="sequence conflict" description="In Ref. 2; BAB23437/BAB30303, 3; EDL05143 and 4; AAH61202/AAH99680/AAI38735." evidence="6" ref="2 3 4">
    <original>A</original>
    <variation>S</variation>
    <location>
        <position position="351"/>
    </location>
</feature>
<feature type="sequence conflict" description="In Ref. 4; AAH99680." evidence="6" ref="4">
    <original>A</original>
    <variation>V</variation>
    <location>
        <position position="530"/>
    </location>
</feature>
<feature type="sequence conflict" description="In Ref. 2; BAB23437." evidence="6" ref="2">
    <original>S</original>
    <variation>P</variation>
    <location>
        <position position="857"/>
    </location>
</feature>
<feature type="sequence conflict" description="In Ref. 4; AAH61202." evidence="6" ref="4">
    <original>C</original>
    <variation>S</variation>
    <location>
        <position position="1002"/>
    </location>
</feature>
<reference key="1">
    <citation type="journal article" date="2004" name="DNA Res.">
        <title>Prediction of the coding sequences of mouse homologues of KIAA gene: IV. The complete nucleotide sequences of 500 mouse KIAA-homologous cDNAs identified by screening of terminal sequences of cDNA clones randomly sampled from size-fractionated libraries.</title>
        <authorList>
            <person name="Okazaki N."/>
            <person name="Kikuno R."/>
            <person name="Ohara R."/>
            <person name="Inamoto S."/>
            <person name="Koseki H."/>
            <person name="Hiraoka S."/>
            <person name="Saga Y."/>
            <person name="Seino S."/>
            <person name="Nishimura M."/>
            <person name="Kaisho T."/>
            <person name="Hoshino K."/>
            <person name="Kitamura H."/>
            <person name="Nagase T."/>
            <person name="Ohara O."/>
            <person name="Koga H."/>
        </authorList>
    </citation>
    <scope>NUCLEOTIDE SEQUENCE [LARGE SCALE MRNA] (ISOFORM 1)</scope>
    <source>
        <tissue>Embryonic tail</tissue>
    </source>
</reference>
<reference key="2">
    <citation type="journal article" date="2005" name="Science">
        <title>The transcriptional landscape of the mammalian genome.</title>
        <authorList>
            <person name="Carninci P."/>
            <person name="Kasukawa T."/>
            <person name="Katayama S."/>
            <person name="Gough J."/>
            <person name="Frith M.C."/>
            <person name="Maeda N."/>
            <person name="Oyama R."/>
            <person name="Ravasi T."/>
            <person name="Lenhard B."/>
            <person name="Wells C."/>
            <person name="Kodzius R."/>
            <person name="Shimokawa K."/>
            <person name="Bajic V.B."/>
            <person name="Brenner S.E."/>
            <person name="Batalov S."/>
            <person name="Forrest A.R."/>
            <person name="Zavolan M."/>
            <person name="Davis M.J."/>
            <person name="Wilming L.G."/>
            <person name="Aidinis V."/>
            <person name="Allen J.E."/>
            <person name="Ambesi-Impiombato A."/>
            <person name="Apweiler R."/>
            <person name="Aturaliya R.N."/>
            <person name="Bailey T.L."/>
            <person name="Bansal M."/>
            <person name="Baxter L."/>
            <person name="Beisel K.W."/>
            <person name="Bersano T."/>
            <person name="Bono H."/>
            <person name="Chalk A.M."/>
            <person name="Chiu K.P."/>
            <person name="Choudhary V."/>
            <person name="Christoffels A."/>
            <person name="Clutterbuck D.R."/>
            <person name="Crowe M.L."/>
            <person name="Dalla E."/>
            <person name="Dalrymple B.P."/>
            <person name="de Bono B."/>
            <person name="Della Gatta G."/>
            <person name="di Bernardo D."/>
            <person name="Down T."/>
            <person name="Engstrom P."/>
            <person name="Fagiolini M."/>
            <person name="Faulkner G."/>
            <person name="Fletcher C.F."/>
            <person name="Fukushima T."/>
            <person name="Furuno M."/>
            <person name="Futaki S."/>
            <person name="Gariboldi M."/>
            <person name="Georgii-Hemming P."/>
            <person name="Gingeras T.R."/>
            <person name="Gojobori T."/>
            <person name="Green R.E."/>
            <person name="Gustincich S."/>
            <person name="Harbers M."/>
            <person name="Hayashi Y."/>
            <person name="Hensch T.K."/>
            <person name="Hirokawa N."/>
            <person name="Hill D."/>
            <person name="Huminiecki L."/>
            <person name="Iacono M."/>
            <person name="Ikeo K."/>
            <person name="Iwama A."/>
            <person name="Ishikawa T."/>
            <person name="Jakt M."/>
            <person name="Kanapin A."/>
            <person name="Katoh M."/>
            <person name="Kawasawa Y."/>
            <person name="Kelso J."/>
            <person name="Kitamura H."/>
            <person name="Kitano H."/>
            <person name="Kollias G."/>
            <person name="Krishnan S.P."/>
            <person name="Kruger A."/>
            <person name="Kummerfeld S.K."/>
            <person name="Kurochkin I.V."/>
            <person name="Lareau L.F."/>
            <person name="Lazarevic D."/>
            <person name="Lipovich L."/>
            <person name="Liu J."/>
            <person name="Liuni S."/>
            <person name="McWilliam S."/>
            <person name="Madan Babu M."/>
            <person name="Madera M."/>
            <person name="Marchionni L."/>
            <person name="Matsuda H."/>
            <person name="Matsuzawa S."/>
            <person name="Miki H."/>
            <person name="Mignone F."/>
            <person name="Miyake S."/>
            <person name="Morris K."/>
            <person name="Mottagui-Tabar S."/>
            <person name="Mulder N."/>
            <person name="Nakano N."/>
            <person name="Nakauchi H."/>
            <person name="Ng P."/>
            <person name="Nilsson R."/>
            <person name="Nishiguchi S."/>
            <person name="Nishikawa S."/>
            <person name="Nori F."/>
            <person name="Ohara O."/>
            <person name="Okazaki Y."/>
            <person name="Orlando V."/>
            <person name="Pang K.C."/>
            <person name="Pavan W.J."/>
            <person name="Pavesi G."/>
            <person name="Pesole G."/>
            <person name="Petrovsky N."/>
            <person name="Piazza S."/>
            <person name="Reed J."/>
            <person name="Reid J.F."/>
            <person name="Ring B.Z."/>
            <person name="Ringwald M."/>
            <person name="Rost B."/>
            <person name="Ruan Y."/>
            <person name="Salzberg S.L."/>
            <person name="Sandelin A."/>
            <person name="Schneider C."/>
            <person name="Schoenbach C."/>
            <person name="Sekiguchi K."/>
            <person name="Semple C.A."/>
            <person name="Seno S."/>
            <person name="Sessa L."/>
            <person name="Sheng Y."/>
            <person name="Shibata Y."/>
            <person name="Shimada H."/>
            <person name="Shimada K."/>
            <person name="Silva D."/>
            <person name="Sinclair B."/>
            <person name="Sperling S."/>
            <person name="Stupka E."/>
            <person name="Sugiura K."/>
            <person name="Sultana R."/>
            <person name="Takenaka Y."/>
            <person name="Taki K."/>
            <person name="Tammoja K."/>
            <person name="Tan S.L."/>
            <person name="Tang S."/>
            <person name="Taylor M.S."/>
            <person name="Tegner J."/>
            <person name="Teichmann S.A."/>
            <person name="Ueda H.R."/>
            <person name="van Nimwegen E."/>
            <person name="Verardo R."/>
            <person name="Wei C.L."/>
            <person name="Yagi K."/>
            <person name="Yamanishi H."/>
            <person name="Zabarovsky E."/>
            <person name="Zhu S."/>
            <person name="Zimmer A."/>
            <person name="Hide W."/>
            <person name="Bult C."/>
            <person name="Grimmond S.M."/>
            <person name="Teasdale R.D."/>
            <person name="Liu E.T."/>
            <person name="Brusic V."/>
            <person name="Quackenbush J."/>
            <person name="Wahlestedt C."/>
            <person name="Mattick J.S."/>
            <person name="Hume D.A."/>
            <person name="Kai C."/>
            <person name="Sasaki D."/>
            <person name="Tomaru Y."/>
            <person name="Fukuda S."/>
            <person name="Kanamori-Katayama M."/>
            <person name="Suzuki M."/>
            <person name="Aoki J."/>
            <person name="Arakawa T."/>
            <person name="Iida J."/>
            <person name="Imamura K."/>
            <person name="Itoh M."/>
            <person name="Kato T."/>
            <person name="Kawaji H."/>
            <person name="Kawagashira N."/>
            <person name="Kawashima T."/>
            <person name="Kojima M."/>
            <person name="Kondo S."/>
            <person name="Konno H."/>
            <person name="Nakano K."/>
            <person name="Ninomiya N."/>
            <person name="Nishio T."/>
            <person name="Okada M."/>
            <person name="Plessy C."/>
            <person name="Shibata K."/>
            <person name="Shiraki T."/>
            <person name="Suzuki S."/>
            <person name="Tagami M."/>
            <person name="Waki K."/>
            <person name="Watahiki A."/>
            <person name="Okamura-Oho Y."/>
            <person name="Suzuki H."/>
            <person name="Kawai J."/>
            <person name="Hayashizaki Y."/>
        </authorList>
    </citation>
    <scope>NUCLEOTIDE SEQUENCE [LARGE SCALE MRNA] (ISOFORM 3)</scope>
    <scope>NUCLEOTIDE SEQUENCE [LARGE SCALE MRNA] OF 1-870 (ISOFORM 1)</scope>
    <source>
        <strain>C57BL/6J</strain>
        <tissue>Lung</tissue>
        <tissue>Testis</tissue>
    </source>
</reference>
<reference key="3">
    <citation type="submission" date="2005-09" db="EMBL/GenBank/DDBJ databases">
        <authorList>
            <person name="Mural R.J."/>
            <person name="Adams M.D."/>
            <person name="Myers E.W."/>
            <person name="Smith H.O."/>
            <person name="Venter J.C."/>
        </authorList>
    </citation>
    <scope>NUCLEOTIDE SEQUENCE [LARGE SCALE GENOMIC DNA]</scope>
</reference>
<reference key="4">
    <citation type="journal article" date="2004" name="Genome Res.">
        <title>The status, quality, and expansion of the NIH full-length cDNA project: the Mammalian Gene Collection (MGC).</title>
        <authorList>
            <consortium name="The MGC Project Team"/>
        </authorList>
    </citation>
    <scope>NUCLEOTIDE SEQUENCE [LARGE SCALE MRNA] (ISOFORM 3)</scope>
    <scope>NUCLEOTIDE SEQUENCE [LARGE SCALE MRNA] OF 1-1012 (ISOFORM 2)</scope>
    <source>
        <tissue>Brain</tissue>
        <tissue>Eye</tissue>
        <tissue>Pituitary</tissue>
    </source>
</reference>